<evidence type="ECO:0000305" key="1"/>
<comment type="similarity">
    <text evidence="1">Belongs to the darcynin family.</text>
</comment>
<feature type="chain" id="PRO_0000305227" description="Darcynin homolog">
    <location>
        <begin position="1"/>
        <end position="124"/>
    </location>
</feature>
<protein>
    <recommendedName>
        <fullName>Darcynin homolog</fullName>
    </recommendedName>
</protein>
<reference key="1">
    <citation type="journal article" date="2007" name="J. Bacteriol.">
        <title>Genome sequence analysis of the emerging human pathogenic acetic acid bacterium Granulibacter bethesdensis.</title>
        <authorList>
            <person name="Greenberg D.E."/>
            <person name="Porcella S.F."/>
            <person name="Zelazny A.M."/>
            <person name="Virtaneva K."/>
            <person name="Sturdevant D.E."/>
            <person name="Kupko J.J. III"/>
            <person name="Barbian K.D."/>
            <person name="Babar A."/>
            <person name="Dorward D.W."/>
            <person name="Holland S.M."/>
        </authorList>
    </citation>
    <scope>NUCLEOTIDE SEQUENCE [LARGE SCALE GENOMIC DNA]</scope>
    <source>
        <strain>ATCC BAA-1260 / CGDNIH1</strain>
    </source>
</reference>
<proteinExistence type="inferred from homology"/>
<sequence length="124" mass="14788">MQRTYTVTIPSFEPALTVFMLVKTSPEWLGFPVERRFALLEEQFTPILRKHAAHVTLRFFDVEFYATRVTDLWMWDARDHHSYQLLVEDLRETAFWDRYFEIVEILPGVENAYARNYGRPAINA</sequence>
<accession>Q0BPE2</accession>
<dbReference type="EMBL" id="CP000394">
    <property type="protein sequence ID" value="ABI63310.1"/>
    <property type="molecule type" value="Genomic_DNA"/>
</dbReference>
<dbReference type="RefSeq" id="WP_011633112.1">
    <property type="nucleotide sequence ID" value="NC_008343.2"/>
</dbReference>
<dbReference type="SMR" id="Q0BPE2"/>
<dbReference type="STRING" id="391165.GbCGDNIH1_2412"/>
<dbReference type="KEGG" id="gbe:GbCGDNIH1_2412"/>
<dbReference type="eggNOG" id="ENOG5031Q68">
    <property type="taxonomic scope" value="Bacteria"/>
</dbReference>
<dbReference type="HOGENOM" id="CLU_165974_0_0_5"/>
<dbReference type="OrthoDB" id="117791at2"/>
<dbReference type="Proteomes" id="UP000001963">
    <property type="component" value="Chromosome"/>
</dbReference>
<dbReference type="InterPro" id="IPR031409">
    <property type="entry name" value="Darcynin"/>
</dbReference>
<dbReference type="Pfam" id="PF17074">
    <property type="entry name" value="Darcynin"/>
    <property type="match status" value="1"/>
</dbReference>
<name>DARCH_GRABC</name>
<gene>
    <name type="ordered locus">GbCGDNIH1_2412</name>
</gene>
<organism>
    <name type="scientific">Granulibacter bethesdensis (strain ATCC BAA-1260 / CGDNIH1)</name>
    <dbReference type="NCBI Taxonomy" id="391165"/>
    <lineage>
        <taxon>Bacteria</taxon>
        <taxon>Pseudomonadati</taxon>
        <taxon>Pseudomonadota</taxon>
        <taxon>Alphaproteobacteria</taxon>
        <taxon>Acetobacterales</taxon>
        <taxon>Acetobacteraceae</taxon>
        <taxon>Granulibacter</taxon>
    </lineage>
</organism>
<keyword id="KW-1185">Reference proteome</keyword>